<gene>
    <name evidence="17" type="primary">CYP71D180</name>
</gene>
<accession>P0DO39</accession>
<sequence length="496" mass="55734">MDISISWVVIIVFVLSYLILMDKWRASKLPGNLPPSPPKLPVIGHLHLLRGGLPQHVLRGITQKYGAVAHLQLGEVHSVVLSSAESTKQAMKVLDPTFADRFDSIGSQIMWYNNDDMIFSRYNDHWRQIRKICVSELLSPRNVRSFGFIRQDEMARLIRVFESSEGAAINASEEISKMSCAIVCRAAFGSVLKDQGKLADLVKEALSMASGFELADLYPSSWLLNLLCVNKYRLQRMRGRLDNILDGFLEEHKVKKSGEFGGEDIVDVLYRMQKDTEMKAPITNNGIKGFIFDVFSAGTETSATTIQWALSELMKNPEKMVKAQAEVREKLKGKTNPDVADVQELKYLHSVVKETLRLHPPFPLIPRLCKEECEVTGYTIPAKTRTLVNVWSIGRDPAYWKDPDTFNPDRFDEVSRDVIGNDFELIPFGAGRRVCPGLHFGLANVEVPLAQLLYHFDYKLPSAMTAADMDMSETPGLSGPRKNPLIMIPTIHNPTS</sequence>
<dbReference type="EC" id="1.14.14.-" evidence="7"/>
<dbReference type="EC" id="1.14.14.51" evidence="7"/>
<dbReference type="EC" id="1.14.14.53" evidence="7"/>
<dbReference type="SMR" id="P0DO39"/>
<dbReference type="UniPathway" id="UPA00213"/>
<dbReference type="GO" id="GO:0016020">
    <property type="term" value="C:membrane"/>
    <property type="evidence" value="ECO:0007669"/>
    <property type="project" value="UniProtKB-SubCell"/>
</dbReference>
<dbReference type="GO" id="GO:0020037">
    <property type="term" value="F:heme binding"/>
    <property type="evidence" value="ECO:0007669"/>
    <property type="project" value="InterPro"/>
</dbReference>
<dbReference type="GO" id="GO:0005506">
    <property type="term" value="F:iron ion binding"/>
    <property type="evidence" value="ECO:0007669"/>
    <property type="project" value="InterPro"/>
</dbReference>
<dbReference type="GO" id="GO:0004497">
    <property type="term" value="F:monooxygenase activity"/>
    <property type="evidence" value="ECO:0007669"/>
    <property type="project" value="UniProtKB-KW"/>
</dbReference>
<dbReference type="GO" id="GO:0016705">
    <property type="term" value="F:oxidoreductase activity, acting on paired donors, with incorporation or reduction of molecular oxygen"/>
    <property type="evidence" value="ECO:0007669"/>
    <property type="project" value="InterPro"/>
</dbReference>
<dbReference type="GO" id="GO:0002213">
    <property type="term" value="P:defense response to insect"/>
    <property type="evidence" value="ECO:0000270"/>
    <property type="project" value="UniProtKB"/>
</dbReference>
<dbReference type="GO" id="GO:0009625">
    <property type="term" value="P:response to insect"/>
    <property type="evidence" value="ECO:0000270"/>
    <property type="project" value="UniProtKB"/>
</dbReference>
<dbReference type="GO" id="GO:0009414">
    <property type="term" value="P:response to water deprivation"/>
    <property type="evidence" value="ECO:0000270"/>
    <property type="project" value="UniProtKB"/>
</dbReference>
<dbReference type="GO" id="GO:0016114">
    <property type="term" value="P:terpenoid biosynthetic process"/>
    <property type="evidence" value="ECO:0007669"/>
    <property type="project" value="UniProtKB-UniPathway"/>
</dbReference>
<dbReference type="CDD" id="cd11072">
    <property type="entry name" value="CYP71-like"/>
    <property type="match status" value="1"/>
</dbReference>
<dbReference type="FunFam" id="1.10.630.10:FF:000043">
    <property type="entry name" value="Cytochrome P450 99A2"/>
    <property type="match status" value="1"/>
</dbReference>
<dbReference type="Gene3D" id="1.10.630.10">
    <property type="entry name" value="Cytochrome P450"/>
    <property type="match status" value="1"/>
</dbReference>
<dbReference type="InterPro" id="IPR052306">
    <property type="entry name" value="CYP450_71D"/>
</dbReference>
<dbReference type="InterPro" id="IPR001128">
    <property type="entry name" value="Cyt_P450"/>
</dbReference>
<dbReference type="InterPro" id="IPR017972">
    <property type="entry name" value="Cyt_P450_CS"/>
</dbReference>
<dbReference type="InterPro" id="IPR002401">
    <property type="entry name" value="Cyt_P450_E_grp-I"/>
</dbReference>
<dbReference type="InterPro" id="IPR036396">
    <property type="entry name" value="Cyt_P450_sf"/>
</dbReference>
<dbReference type="PANTHER" id="PTHR47953:SF19">
    <property type="entry name" value="OS06G0641600 PROTEIN"/>
    <property type="match status" value="1"/>
</dbReference>
<dbReference type="PANTHER" id="PTHR47953">
    <property type="entry name" value="OS08G0105600 PROTEIN"/>
    <property type="match status" value="1"/>
</dbReference>
<dbReference type="Pfam" id="PF00067">
    <property type="entry name" value="p450"/>
    <property type="match status" value="1"/>
</dbReference>
<dbReference type="PRINTS" id="PR00463">
    <property type="entry name" value="EP450I"/>
</dbReference>
<dbReference type="PRINTS" id="PR00385">
    <property type="entry name" value="P450"/>
</dbReference>
<dbReference type="SUPFAM" id="SSF48264">
    <property type="entry name" value="Cytochrome P450"/>
    <property type="match status" value="1"/>
</dbReference>
<dbReference type="PROSITE" id="PS00086">
    <property type="entry name" value="CYTOCHROME_P450"/>
    <property type="match status" value="1"/>
</dbReference>
<protein>
    <recommendedName>
        <fullName evidence="17">Cytochrome P450 71D180</fullName>
    </recommendedName>
    <alternativeName>
        <fullName evidence="19">Carvacrol synthase</fullName>
        <ecNumber evidence="7">1.14.14.-</ecNumber>
    </alternativeName>
    <alternativeName>
        <fullName evidence="19">Carveol synthase</fullName>
        <ecNumber evidence="7">1.14.14.51</ecNumber>
        <ecNumber evidence="7">1.14.14.53</ecNumber>
    </alternativeName>
    <alternativeName>
        <fullName evidence="19">Gamma-terpinene hydroxylase</fullName>
    </alternativeName>
    <alternativeName>
        <fullName evidence="19">Limonene hydroxylase</fullName>
    </alternativeName>
</protein>
<comment type="function">
    <text evidence="4 6 7">Involved in the biosynthesis of phenolic monoterpenes natural products thymol and carvacrol which have a broad range of biological activities acting as antimicrobial compounds, insecticides, antioxidants and pharmaceutical agents (PubMed:26156773, PubMed:30231481, Ref.1). Catalyzes the C2-hydroxylation of gamma-terpinene to produce carvacrol (Ref.1). Also mediates the C6-hydroxylation of (4S)-limonene and (4R)-limonene to form carveol (Ref.1).</text>
</comment>
<comment type="catalytic activity">
    <reaction evidence="7">
        <text>gamma-terpinene + 2 reduced [NADPH--hemoprotein reductase] + 2 O2 = carvacrol + 2 oxidized [NADPH--hemoprotein reductase] + 3 H2O + 2 H(+)</text>
        <dbReference type="Rhea" id="RHEA:67404"/>
        <dbReference type="Rhea" id="RHEA-COMP:11964"/>
        <dbReference type="Rhea" id="RHEA-COMP:11965"/>
        <dbReference type="ChEBI" id="CHEBI:3440"/>
        <dbReference type="ChEBI" id="CHEBI:10577"/>
        <dbReference type="ChEBI" id="CHEBI:15377"/>
        <dbReference type="ChEBI" id="CHEBI:15378"/>
        <dbReference type="ChEBI" id="CHEBI:15379"/>
        <dbReference type="ChEBI" id="CHEBI:57618"/>
        <dbReference type="ChEBI" id="CHEBI:58210"/>
    </reaction>
    <physiologicalReaction direction="left-to-right" evidence="7">
        <dbReference type="Rhea" id="RHEA:67405"/>
    </physiologicalReaction>
</comment>
<comment type="catalytic activity">
    <reaction evidence="7">
        <text>(4S)-limonene + reduced [NADPH--hemoprotein reductase] + O2 = (1S,5R)-carveol + oxidized [NADPH--hemoprotein reductase] + H2O + H(+)</text>
        <dbReference type="Rhea" id="RHEA:17945"/>
        <dbReference type="Rhea" id="RHEA-COMP:11964"/>
        <dbReference type="Rhea" id="RHEA-COMP:11965"/>
        <dbReference type="ChEBI" id="CHEBI:15377"/>
        <dbReference type="ChEBI" id="CHEBI:15378"/>
        <dbReference type="ChEBI" id="CHEBI:15379"/>
        <dbReference type="ChEBI" id="CHEBI:15383"/>
        <dbReference type="ChEBI" id="CHEBI:15389"/>
        <dbReference type="ChEBI" id="CHEBI:57618"/>
        <dbReference type="ChEBI" id="CHEBI:58210"/>
        <dbReference type="EC" id="1.14.14.51"/>
    </reaction>
    <physiologicalReaction direction="left-to-right" evidence="7">
        <dbReference type="Rhea" id="RHEA:17946"/>
    </physiologicalReaction>
</comment>
<comment type="catalytic activity">
    <reaction evidence="7">
        <text>(4R)-limonene + reduced [NADPH--hemoprotein reductase] + O2 = (1R,5S)-carveol + oxidized [NADPH--hemoprotein reductase] + H2O + H(+)</text>
        <dbReference type="Rhea" id="RHEA:18957"/>
        <dbReference type="Rhea" id="RHEA-COMP:11964"/>
        <dbReference type="Rhea" id="RHEA-COMP:11965"/>
        <dbReference type="ChEBI" id="CHEBI:15377"/>
        <dbReference type="ChEBI" id="CHEBI:15378"/>
        <dbReference type="ChEBI" id="CHEBI:15379"/>
        <dbReference type="ChEBI" id="CHEBI:15382"/>
        <dbReference type="ChEBI" id="CHEBI:15388"/>
        <dbReference type="ChEBI" id="CHEBI:57618"/>
        <dbReference type="ChEBI" id="CHEBI:58210"/>
        <dbReference type="EC" id="1.14.14.53"/>
    </reaction>
    <physiologicalReaction direction="left-to-right" evidence="7">
        <dbReference type="Rhea" id="RHEA:18958"/>
    </physiologicalReaction>
</comment>
<comment type="cofactor">
    <cofactor evidence="1">
        <name>heme</name>
        <dbReference type="ChEBI" id="CHEBI:30413"/>
    </cofactor>
</comment>
<comment type="pathway">
    <text evidence="7">Secondary metabolite biosynthesis; terpenoid biosynthesis.</text>
</comment>
<comment type="subcellular location">
    <subcellularLocation>
        <location evidence="2">Membrane</location>
        <topology evidence="18">Single-pass type II membrane protein</topology>
    </subcellularLocation>
</comment>
<comment type="tissue specificity">
    <text evidence="8">Mostly expressed in flowers and stems, and, to a lower extent, in leaves.</text>
</comment>
<comment type="induction">
    <text evidence="4 5 6">Induced by drought (PubMed:27915173). Accumulates upon root colonization by Myrmica ants (Myrmica sabuleti and Myrmica scabrinodis) concomitantly with jasmonates induction; this leads to the production of carvacrol, an attractant for the phytophagous-predaceous butterfly Maculinea arion, whose larvae initially feed on Origanum vulgare flowerheads before switching to parasitize Myrmica ant colonies for their main period of growth (PubMed:26156773). Strongly induced by Spodoptera littoralis, a herbivory insect, thus triggering the production of carvacrol, which exhibits insecticide properties (PubMed:30231481).</text>
</comment>
<comment type="biotechnology">
    <text evidence="10 11 14 16">The monoterpenic phenol thymol is widely used as a fragrance and a flavoring ingredient in food and cosmetic industries (PubMed:29785774). Its derivatives have also several biological and pharmacological properties such as antimicrobial, antioxidant, anticarcinogenesis, anti-inflammatory and antispasmodic activities (PubMed:29785774, PubMed:29874939). Medical applications include the treatment of disorders affecting the respiratory, nervous, and cardiovascular systems (PubMed:29785774). It may also act as a growth enhancer and immunomodulator (PubMed:29785774). Thymol may also have antiviral activity toward COVID-19 by binding to the S1 receptor binding domain of the SARS-CoV-2 spike (S) glycoprotein (PubMed:32834111, PubMed:33855010).</text>
</comment>
<comment type="biotechnology">
    <text evidence="9 11 12 13 14 15 16">The monoterpenic phenol carvacrol is commonly used as a fragrance and a food flavoring ingredient and preservative (PubMed:24915411). Its derivatives exhibit also various biological and pharmacological properties including antioxidant, antibacterial, antifungal, insecticid, nematicid, anticancer, anti-inflammatory, hepatoprotective, spasmolytic, and vasorelaxant (PubMed:24915411, PubMed:29874939, PubMed:30836858, PubMed:33664752). Phytochemical inhibitor targeting the main SARS-CoV-2 viral protease (Mpro) and ACE2 in human host cells, carvacrol is a possible candidate for treating COVID-19 (PubMed:32448034, PubMed:33664752). Carvacrol may also have antiviral activity toward COVID-19 by binding to the S1 receptor binding domain of the SARS-CoV-2 spike (S) glycoprotein (PubMed:32834111, PubMed:33855010).</text>
</comment>
<comment type="similarity">
    <text evidence="18">Belongs to the cytochrome P450 family.</text>
</comment>
<evidence type="ECO:0000250" key="1">
    <source>
        <dbReference type="UniProtKB" id="Q96242"/>
    </source>
</evidence>
<evidence type="ECO:0000255" key="2"/>
<evidence type="ECO:0000256" key="3">
    <source>
        <dbReference type="SAM" id="MobiDB-lite"/>
    </source>
</evidence>
<evidence type="ECO:0000269" key="4">
    <source>
    </source>
</evidence>
<evidence type="ECO:0000269" key="5">
    <source>
    </source>
</evidence>
<evidence type="ECO:0000269" key="6">
    <source>
    </source>
</evidence>
<evidence type="ECO:0000269" key="7">
    <source ref="1"/>
</evidence>
<evidence type="ECO:0000269" key="8">
    <source ref="5"/>
</evidence>
<evidence type="ECO:0000303" key="9">
    <source>
    </source>
</evidence>
<evidence type="ECO:0000303" key="10">
    <source>
    </source>
</evidence>
<evidence type="ECO:0000303" key="11">
    <source>
    </source>
</evidence>
<evidence type="ECO:0000303" key="12">
    <source>
    </source>
</evidence>
<evidence type="ECO:0000303" key="13">
    <source>
    </source>
</evidence>
<evidence type="ECO:0000303" key="14">
    <source>
    </source>
</evidence>
<evidence type="ECO:0000303" key="15">
    <source>
    </source>
</evidence>
<evidence type="ECO:0000303" key="16">
    <source>
    </source>
</evidence>
<evidence type="ECO:0000303" key="17">
    <source ref="1"/>
</evidence>
<evidence type="ECO:0000305" key="18"/>
<evidence type="ECO:0000305" key="19">
    <source ref="1"/>
</evidence>
<proteinExistence type="evidence at protein level"/>
<feature type="chain" id="PRO_0000453326" description="Cytochrome P450 71D180">
    <location>
        <begin position="1"/>
        <end position="496"/>
    </location>
</feature>
<feature type="transmembrane region" description="Helical; Signal-anchor for type II membrane protein" evidence="2">
    <location>
        <begin position="1"/>
        <end position="21"/>
    </location>
</feature>
<feature type="region of interest" description="Disordered" evidence="3">
    <location>
        <begin position="471"/>
        <end position="496"/>
    </location>
</feature>
<feature type="binding site" description="axial binding residue" evidence="1">
    <location>
        <position position="435"/>
    </location>
    <ligand>
        <name>heme</name>
        <dbReference type="ChEBI" id="CHEBI:30413"/>
    </ligand>
    <ligandPart>
        <name>Fe</name>
        <dbReference type="ChEBI" id="CHEBI:18248"/>
    </ligandPart>
</feature>
<name>CP180_ORIVU</name>
<reference key="1">
    <citation type="thesis" date="2011" institute="Friedrich Schiller University of Jena" country="Germany">
        <title>Biosynthesis of the phenolic monoterpenes, thymol and carvacrol, by terpene synthases and cytochrome P450s in oregano and thyme.</title>
        <authorList>
            <person name="Crocoll C."/>
        </authorList>
    </citation>
    <scope>NUCLEOTIDE SEQUENCE [MRNA]</scope>
    <scope>FUNCTION</scope>
    <scope>CATALYTIC ACTIVITY</scope>
    <scope>PATHWAY</scope>
    <scope>BIOPHYSICOCHEMICAL PROPERTIES</scope>
    <source>
        <strain>cv. Ct</strain>
        <tissue>Leaf</tissue>
    </source>
</reference>
<reference key="2">
    <citation type="journal article" date="2015" name="Crit. Rev. Food Sci. Nutr.">
        <title>The bioactivity and toxicological actions of carvacrol.</title>
        <authorList>
            <person name="Suntres Z.E."/>
            <person name="Coccimiglio J."/>
            <person name="Alipour M."/>
        </authorList>
    </citation>
    <scope>REVIEW ON CARVACROL</scope>
    <scope>BIOTECHNOLOGY</scope>
</reference>
<reference key="3">
    <citation type="journal article" date="2015" name="Proc. R. Soc. B">
        <title>Plant defences against ants provide a pathway to social parasitism in butterflies.</title>
        <authorList>
            <person name="Patricelli D."/>
            <person name="Barbero F."/>
            <person name="Occhipinti A."/>
            <person name="Bertea C.M."/>
            <person name="Bonelli S."/>
            <person name="Casacci L.P."/>
            <person name="Zebelo S.A."/>
            <person name="Crocoll C."/>
            <person name="Gershenzon J."/>
            <person name="Maffei M.E."/>
            <person name="Thomas J.A."/>
            <person name="Balletto E."/>
        </authorList>
    </citation>
    <scope>FUNCTION</scope>
    <scope>INDUCTION BY MYRMICA ANTS</scope>
</reference>
<reference key="4">
    <citation type="journal article" date="2017" name="Plant Physiol. Biochem.">
        <title>Effect of prolonged water stress on essential oil content, compositions and gene expression patterns of mono- and sesquiterpene synthesis in two oregano (Origanum vulgare L.) subspecies.</title>
        <authorList>
            <person name="Morshedloo M.R."/>
            <person name="Craker L.E."/>
            <person name="Salami A."/>
            <person name="Nazeri V."/>
            <person name="Sang H."/>
            <person name="Maggi F."/>
        </authorList>
    </citation>
    <scope>INDUCTION BY DROUGHT</scope>
</reference>
<reference key="5">
    <citation type="journal article" date="2018" name="Ind. Crops Prod.">
        <title>Divergence in tissue-specific expression patterns of genes associated with the terpenoid biosynthesis in two oregano species Origanum vulgare L., and Origanum majorana.</title>
        <authorList>
            <person name="Jan S."/>
            <person name="Mir J.I."/>
            <person name="Shafi W."/>
            <person name="Faktoo S.Z."/>
            <person name="Singh D.B."/>
            <person name="Wijaya L."/>
            <person name="Alyemeni M.N."/>
            <person name="Ahmad P."/>
        </authorList>
    </citation>
    <scope>TISSUE SPECIFICITY</scope>
</reference>
<reference key="6">
    <citation type="journal article" date="2018" name="Int. J. Mol. Sci.">
        <title>Origanum vulgare Terpenoids Induce Oxidative stress and reduce the feeding activity of Spodoptera littoralis.</title>
        <authorList>
            <person name="Agliassa C."/>
            <person name="Maffei M.E."/>
        </authorList>
    </citation>
    <scope>FUNCTION</scope>
    <scope>INDUCTION BY SPODOPTERA LITTORALIS</scope>
</reference>
<reference key="7">
    <citation type="journal article" date="2018" name="Phytother. Res.">
        <title>Thymol, thyme, and other plant sources: Health and potential uses.</title>
        <authorList>
            <person name="Salehi B."/>
            <person name="Mishra A.P."/>
            <person name="Shukla I."/>
            <person name="Sharifi-Rad M."/>
            <person name="Contreras M.D.M."/>
            <person name="Segura-Carretero A."/>
            <person name="Fathi H."/>
            <person name="Nasrabadi N.N."/>
            <person name="Kobarfard F."/>
            <person name="Sharifi-Rad J."/>
        </authorList>
    </citation>
    <scope>REVIEW ON THYMOL</scope>
    <scope>BIOTECHNOLOGY</scope>
</reference>
<reference key="8">
    <citation type="journal article" date="2019" name="Nat. Prod. Res.">
        <title>Synthesis and antifungal activity of carvacrol and thymol esters with heteroaromatic carboxylic acids.</title>
        <authorList>
            <person name="Wang K."/>
            <person name="Jiang S."/>
            <person name="Yang Y."/>
            <person name="Fan L."/>
            <person name="Su F."/>
            <person name="Ye M."/>
        </authorList>
    </citation>
    <scope>REVIEW ON CARVACROL AND THYMOL</scope>
    <scope>BIOTECHNOLOGY</scope>
</reference>
<reference key="9">
    <citation type="journal article" date="2020" name="Front. Plant Sci.">
        <title>Carvacrol, a plant metabolite targeting viral protease (Mpro) and ACE2 in host cells can be a possible candidate for COVID-19.</title>
        <authorList>
            <person name="Javed H."/>
            <person name="Meeran M.F.N."/>
            <person name="Jha N.K."/>
            <person name="Ojha S."/>
        </authorList>
    </citation>
    <scope>REVIEW ON CARVACROL EFFECTS ON COVID-19</scope>
    <scope>BIOTECHNOLOGY</scope>
</reference>
<reference key="10">
    <citation type="journal article" date="2020" name="J. Biomol. Struct. Dyn.">
        <title>Identification of phytochemical inhibitors against main protease of COVID-19 using molecular modeling approaches.</title>
        <authorList>
            <person name="Kumar A."/>
            <person name="Choudhir G."/>
            <person name="Shukla S.K."/>
            <person name="Sharma M."/>
            <person name="Tyagi P."/>
            <person name="Bhushan A."/>
            <person name="Rathore M."/>
        </authorList>
    </citation>
    <scope>REVIEW ON CARVACROL EFFECTS ON COVID-19</scope>
    <scope>BIOTECHNOLOGY</scope>
</reference>
<reference key="11">
    <citation type="journal article" date="2020" name="J. Biomol. Struct. Dyn.">
        <title>Synthesis, anticholinesterase activity and molecular modeling studies of novel carvacrol-substituted amide derivatives.</title>
        <authorList>
            <person name="Zengin Kurt B."/>
            <person name="Durdagi S."/>
            <person name="Celebi G."/>
            <person name="Ekhteiari Salmas R."/>
            <person name="Sonmez F."/>
        </authorList>
    </citation>
    <scope>REVIEW ON CARVACROL DERIVATIVES</scope>
    <scope>BIOTECHNOLOGY</scope>
</reference>
<reference key="12">
    <citation type="journal article" date="2020" name="J. Mol. Struct.">
        <title>Computational evaluation of major components from plant essential oils as potent inhibitors of SARS-CoV-2 spike protein.</title>
        <authorList>
            <person name="Kulkarni S.A."/>
            <person name="Nagarajan S.K."/>
            <person name="Ramesh V."/>
            <person name="Palaniyandi V."/>
            <person name="Selvam S.P."/>
            <person name="Madhavan T."/>
        </authorList>
    </citation>
    <scope>REVIEW ON PLANT ESSENTIAL OILS EFFECTS ON COVID-19</scope>
    <scope>BIOTECHNOLOGY</scope>
</reference>
<reference key="13">
    <citation type="journal article" date="2021" name="Front. Chem.">
        <title>Antiviral essential oil components against SARS-CoV-2 in pre-procedural mouth rinses for dental settings during COVID-19: A computational study.</title>
        <authorList>
            <person name="Yadalam P.K."/>
            <person name="Varatharajan K."/>
            <person name="Rajapandian K."/>
            <person name="Chopra P."/>
            <person name="Arumuganainar D."/>
            <person name="Nagarathnam T."/>
            <person name="Sohn H."/>
            <person name="Madhavan T."/>
        </authorList>
    </citation>
    <scope>REVIEW ON PLANT ESSENTIAL OILS EFFECTS ON COVID-19</scope>
    <scope>BIOTECHNOLOGY</scope>
</reference>
<keyword id="KW-0349">Heme</keyword>
<keyword id="KW-0408">Iron</keyword>
<keyword id="KW-0472">Membrane</keyword>
<keyword id="KW-0479">Metal-binding</keyword>
<keyword id="KW-0503">Monooxygenase</keyword>
<keyword id="KW-0560">Oxidoreductase</keyword>
<keyword id="KW-0735">Signal-anchor</keyword>
<keyword id="KW-0812">Transmembrane</keyword>
<keyword id="KW-1133">Transmembrane helix</keyword>
<organism>
    <name type="scientific">Origanum vulgare</name>
    <name type="common">Wild marjoram</name>
    <dbReference type="NCBI Taxonomy" id="39352"/>
    <lineage>
        <taxon>Eukaryota</taxon>
        <taxon>Viridiplantae</taxon>
        <taxon>Streptophyta</taxon>
        <taxon>Embryophyta</taxon>
        <taxon>Tracheophyta</taxon>
        <taxon>Spermatophyta</taxon>
        <taxon>Magnoliopsida</taxon>
        <taxon>eudicotyledons</taxon>
        <taxon>Gunneridae</taxon>
        <taxon>Pentapetalae</taxon>
        <taxon>asterids</taxon>
        <taxon>lamiids</taxon>
        <taxon>Lamiales</taxon>
        <taxon>Lamiaceae</taxon>
        <taxon>Nepetoideae</taxon>
        <taxon>Mentheae</taxon>
        <taxon>Origanum</taxon>
    </lineage>
</organism>